<comment type="function">
    <text evidence="1">Part of the twin-arginine translocation (Tat) system that transports large folded proteins containing a characteristic twin-arginine motif in their signal peptide across membranes. TatA could form the protein-conducting channel of the Tat system.</text>
</comment>
<comment type="subunit">
    <text evidence="1">The Tat system comprises two distinct complexes: a TatABC complex, containing multiple copies of TatA, TatB and TatC subunits, and a separate TatA complex, containing only TatA subunits. Substrates initially bind to the TatABC complex, which probably triggers association of the separate TatA complex to form the active translocon.</text>
</comment>
<comment type="subcellular location">
    <subcellularLocation>
        <location evidence="1">Cell inner membrane</location>
        <topology evidence="1">Single-pass membrane protein</topology>
    </subcellularLocation>
</comment>
<comment type="similarity">
    <text evidence="1">Belongs to the TatA/E family.</text>
</comment>
<keyword id="KW-0997">Cell inner membrane</keyword>
<keyword id="KW-1003">Cell membrane</keyword>
<keyword id="KW-0472">Membrane</keyword>
<keyword id="KW-0653">Protein transport</keyword>
<keyword id="KW-0811">Translocation</keyword>
<keyword id="KW-0812">Transmembrane</keyword>
<keyword id="KW-1133">Transmembrane helix</keyword>
<keyword id="KW-0813">Transport</keyword>
<feature type="chain" id="PRO_1000197913" description="Sec-independent protein translocase protein TatA">
    <location>
        <begin position="1"/>
        <end position="84"/>
    </location>
</feature>
<feature type="transmembrane region" description="Helical" evidence="1">
    <location>
        <begin position="1"/>
        <end position="21"/>
    </location>
</feature>
<feature type="region of interest" description="Disordered" evidence="2">
    <location>
        <begin position="40"/>
        <end position="84"/>
    </location>
</feature>
<feature type="compositionally biased region" description="Basic and acidic residues" evidence="2">
    <location>
        <begin position="42"/>
        <end position="66"/>
    </location>
</feature>
<feature type="compositionally biased region" description="Basic and acidic residues" evidence="2">
    <location>
        <begin position="75"/>
        <end position="84"/>
    </location>
</feature>
<proteinExistence type="inferred from homology"/>
<protein>
    <recommendedName>
        <fullName evidence="1">Sec-independent protein translocase protein TatA</fullName>
    </recommendedName>
</protein>
<sequence length="84" mass="9111">MGGISIWQLLIIAVIVILLFGTKKLRGMGGDLGSAVKGFKKAMSDEDKPADKKDADFEPKNIEQQKTEASAETTAETKKDKEQA</sequence>
<accession>B7VHC4</accession>
<name>TATA_VIBA3</name>
<evidence type="ECO:0000255" key="1">
    <source>
        <dbReference type="HAMAP-Rule" id="MF_00236"/>
    </source>
</evidence>
<evidence type="ECO:0000256" key="2">
    <source>
        <dbReference type="SAM" id="MobiDB-lite"/>
    </source>
</evidence>
<gene>
    <name evidence="1" type="primary">tatA</name>
    <name type="ordered locus">VS_0101</name>
</gene>
<dbReference type="EMBL" id="FM954972">
    <property type="protein sequence ID" value="CAV17136.1"/>
    <property type="molecule type" value="Genomic_DNA"/>
</dbReference>
<dbReference type="SMR" id="B7VHC4"/>
<dbReference type="STRING" id="575788.VS_0101"/>
<dbReference type="KEGG" id="vsp:VS_0101"/>
<dbReference type="eggNOG" id="COG1826">
    <property type="taxonomic scope" value="Bacteria"/>
</dbReference>
<dbReference type="HOGENOM" id="CLU_086034_5_1_6"/>
<dbReference type="Proteomes" id="UP000009100">
    <property type="component" value="Chromosome 1"/>
</dbReference>
<dbReference type="GO" id="GO:0033281">
    <property type="term" value="C:TAT protein transport complex"/>
    <property type="evidence" value="ECO:0007669"/>
    <property type="project" value="UniProtKB-UniRule"/>
</dbReference>
<dbReference type="GO" id="GO:0008320">
    <property type="term" value="F:protein transmembrane transporter activity"/>
    <property type="evidence" value="ECO:0007669"/>
    <property type="project" value="UniProtKB-UniRule"/>
</dbReference>
<dbReference type="GO" id="GO:0043953">
    <property type="term" value="P:protein transport by the Tat complex"/>
    <property type="evidence" value="ECO:0007669"/>
    <property type="project" value="UniProtKB-UniRule"/>
</dbReference>
<dbReference type="Gene3D" id="1.20.5.3310">
    <property type="match status" value="1"/>
</dbReference>
<dbReference type="HAMAP" id="MF_00236">
    <property type="entry name" value="TatA_E"/>
    <property type="match status" value="1"/>
</dbReference>
<dbReference type="InterPro" id="IPR003369">
    <property type="entry name" value="TatA/B/E"/>
</dbReference>
<dbReference type="InterPro" id="IPR006312">
    <property type="entry name" value="TatA/E"/>
</dbReference>
<dbReference type="NCBIfam" id="NF002813">
    <property type="entry name" value="PRK02958.1"/>
    <property type="match status" value="1"/>
</dbReference>
<dbReference type="NCBIfam" id="NF003396">
    <property type="entry name" value="PRK04598.1"/>
    <property type="match status" value="1"/>
</dbReference>
<dbReference type="NCBIfam" id="TIGR01411">
    <property type="entry name" value="tatAE"/>
    <property type="match status" value="1"/>
</dbReference>
<dbReference type="PANTHER" id="PTHR42982">
    <property type="entry name" value="SEC-INDEPENDENT PROTEIN TRANSLOCASE PROTEIN TATA"/>
    <property type="match status" value="1"/>
</dbReference>
<dbReference type="PANTHER" id="PTHR42982:SF1">
    <property type="entry name" value="SEC-INDEPENDENT PROTEIN TRANSLOCASE PROTEIN TATA"/>
    <property type="match status" value="1"/>
</dbReference>
<dbReference type="Pfam" id="PF02416">
    <property type="entry name" value="TatA_B_E"/>
    <property type="match status" value="1"/>
</dbReference>
<organism>
    <name type="scientific">Vibrio atlanticus (strain LGP32)</name>
    <name type="common">Vibrio splendidus (strain Mel32)</name>
    <dbReference type="NCBI Taxonomy" id="575788"/>
    <lineage>
        <taxon>Bacteria</taxon>
        <taxon>Pseudomonadati</taxon>
        <taxon>Pseudomonadota</taxon>
        <taxon>Gammaproteobacteria</taxon>
        <taxon>Vibrionales</taxon>
        <taxon>Vibrionaceae</taxon>
        <taxon>Vibrio</taxon>
    </lineage>
</organism>
<reference key="1">
    <citation type="submission" date="2009-02" db="EMBL/GenBank/DDBJ databases">
        <title>Vibrio splendidus str. LGP32 complete genome.</title>
        <authorList>
            <person name="Mazel D."/>
            <person name="Le Roux F."/>
        </authorList>
    </citation>
    <scope>NUCLEOTIDE SEQUENCE [LARGE SCALE GENOMIC DNA]</scope>
    <source>
        <strain>LGP32</strain>
    </source>
</reference>